<dbReference type="EC" id="2.1.1.163" evidence="1"/>
<dbReference type="EMBL" id="BA000030">
    <property type="protein sequence ID" value="BAC72543.1"/>
    <property type="molecule type" value="Genomic_DNA"/>
</dbReference>
<dbReference type="RefSeq" id="WP_010986254.1">
    <property type="nucleotide sequence ID" value="NZ_JZJK01000077.1"/>
</dbReference>
<dbReference type="SMR" id="Q81ZX2"/>
<dbReference type="GeneID" id="41541911"/>
<dbReference type="KEGG" id="sma:SAVERM_4831"/>
<dbReference type="eggNOG" id="COG2226">
    <property type="taxonomic scope" value="Bacteria"/>
</dbReference>
<dbReference type="HOGENOM" id="CLU_037990_0_0_11"/>
<dbReference type="OrthoDB" id="9808140at2"/>
<dbReference type="UniPathway" id="UPA00079">
    <property type="reaction ID" value="UER00169"/>
</dbReference>
<dbReference type="Proteomes" id="UP000000428">
    <property type="component" value="Chromosome"/>
</dbReference>
<dbReference type="GO" id="GO:0043770">
    <property type="term" value="F:demethylmenaquinone methyltransferase activity"/>
    <property type="evidence" value="ECO:0007669"/>
    <property type="project" value="UniProtKB-UniRule"/>
</dbReference>
<dbReference type="GO" id="GO:0009234">
    <property type="term" value="P:menaquinone biosynthetic process"/>
    <property type="evidence" value="ECO:0007669"/>
    <property type="project" value="UniProtKB-UniRule"/>
</dbReference>
<dbReference type="GO" id="GO:0032259">
    <property type="term" value="P:methylation"/>
    <property type="evidence" value="ECO:0007669"/>
    <property type="project" value="UniProtKB-KW"/>
</dbReference>
<dbReference type="CDD" id="cd02440">
    <property type="entry name" value="AdoMet_MTases"/>
    <property type="match status" value="1"/>
</dbReference>
<dbReference type="Gene3D" id="3.40.50.150">
    <property type="entry name" value="Vaccinia Virus protein VP39"/>
    <property type="match status" value="1"/>
</dbReference>
<dbReference type="HAMAP" id="MF_01813">
    <property type="entry name" value="MenG_UbiE_methyltr"/>
    <property type="match status" value="1"/>
</dbReference>
<dbReference type="InterPro" id="IPR029063">
    <property type="entry name" value="SAM-dependent_MTases_sf"/>
</dbReference>
<dbReference type="InterPro" id="IPR004033">
    <property type="entry name" value="UbiE/COQ5_MeTrFase"/>
</dbReference>
<dbReference type="InterPro" id="IPR023576">
    <property type="entry name" value="UbiE/COQ5_MeTrFase_CS"/>
</dbReference>
<dbReference type="NCBIfam" id="TIGR01934">
    <property type="entry name" value="MenG_MenH_UbiE"/>
    <property type="match status" value="1"/>
</dbReference>
<dbReference type="NCBIfam" id="NF001241">
    <property type="entry name" value="PRK00216.1-2"/>
    <property type="match status" value="1"/>
</dbReference>
<dbReference type="PANTHER" id="PTHR43591:SF24">
    <property type="entry name" value="2-METHOXY-6-POLYPRENYL-1,4-BENZOQUINOL METHYLASE, MITOCHONDRIAL"/>
    <property type="match status" value="1"/>
</dbReference>
<dbReference type="PANTHER" id="PTHR43591">
    <property type="entry name" value="METHYLTRANSFERASE"/>
    <property type="match status" value="1"/>
</dbReference>
<dbReference type="Pfam" id="PF01209">
    <property type="entry name" value="Ubie_methyltran"/>
    <property type="match status" value="1"/>
</dbReference>
<dbReference type="SUPFAM" id="SSF53335">
    <property type="entry name" value="S-adenosyl-L-methionine-dependent methyltransferases"/>
    <property type="match status" value="1"/>
</dbReference>
<dbReference type="PROSITE" id="PS51608">
    <property type="entry name" value="SAM_MT_UBIE"/>
    <property type="match status" value="1"/>
</dbReference>
<dbReference type="PROSITE" id="PS01183">
    <property type="entry name" value="UBIE_1"/>
    <property type="match status" value="1"/>
</dbReference>
<dbReference type="PROSITE" id="PS01184">
    <property type="entry name" value="UBIE_2"/>
    <property type="match status" value="1"/>
</dbReference>
<proteinExistence type="inferred from homology"/>
<keyword id="KW-0474">Menaquinone biosynthesis</keyword>
<keyword id="KW-0489">Methyltransferase</keyword>
<keyword id="KW-1185">Reference proteome</keyword>
<keyword id="KW-0949">S-adenosyl-L-methionine</keyword>
<keyword id="KW-0808">Transferase</keyword>
<name>MENG_STRAW</name>
<comment type="function">
    <text evidence="1">Methyltransferase required for the conversion of demethylmenaquinol (DMKH2) to menaquinol (MKH2).</text>
</comment>
<comment type="catalytic activity">
    <reaction evidence="1">
        <text>a 2-demethylmenaquinol + S-adenosyl-L-methionine = a menaquinol + S-adenosyl-L-homocysteine + H(+)</text>
        <dbReference type="Rhea" id="RHEA:42640"/>
        <dbReference type="Rhea" id="RHEA-COMP:9539"/>
        <dbReference type="Rhea" id="RHEA-COMP:9563"/>
        <dbReference type="ChEBI" id="CHEBI:15378"/>
        <dbReference type="ChEBI" id="CHEBI:18151"/>
        <dbReference type="ChEBI" id="CHEBI:55437"/>
        <dbReference type="ChEBI" id="CHEBI:57856"/>
        <dbReference type="ChEBI" id="CHEBI:59789"/>
        <dbReference type="EC" id="2.1.1.163"/>
    </reaction>
</comment>
<comment type="pathway">
    <text evidence="1">Quinol/quinone metabolism; menaquinone biosynthesis; menaquinol from 1,4-dihydroxy-2-naphthoate: step 2/2.</text>
</comment>
<comment type="similarity">
    <text evidence="1">Belongs to the class I-like SAM-binding methyltransferase superfamily. MenG/UbiE family.</text>
</comment>
<sequence>MTRASLDKQPHEVASMFDDVAERYDLTNDLLSLGQDRVWRREVAKAVDARPAQKILDLAAGTATSSLPFARAGAYVVPCDFSLGMLRVGKKNHPWLPLTAGDATKLPFKDDTFDAVTISFGLRNVQDTDTALSELYRVTKPGGRVVICEFSHPTWAPFRTVYTEYLMRALPPVARAVSSNPDAYVYLAESIRAWPTQPELAERLRKAGWSKVAWRNLTGGVVALHRGFKAV</sequence>
<organism>
    <name type="scientific">Streptomyces avermitilis (strain ATCC 31267 / DSM 46492 / JCM 5070 / NBRC 14893 / NCIMB 12804 / NRRL 8165 / MA-4680)</name>
    <dbReference type="NCBI Taxonomy" id="227882"/>
    <lineage>
        <taxon>Bacteria</taxon>
        <taxon>Bacillati</taxon>
        <taxon>Actinomycetota</taxon>
        <taxon>Actinomycetes</taxon>
        <taxon>Kitasatosporales</taxon>
        <taxon>Streptomycetaceae</taxon>
        <taxon>Streptomyces</taxon>
    </lineage>
</organism>
<gene>
    <name evidence="1" type="primary">menG</name>
    <name type="ordered locus">SAV_4831</name>
</gene>
<evidence type="ECO:0000255" key="1">
    <source>
        <dbReference type="HAMAP-Rule" id="MF_01813"/>
    </source>
</evidence>
<protein>
    <recommendedName>
        <fullName evidence="1">Demethylmenaquinone methyltransferase</fullName>
        <ecNumber evidence="1">2.1.1.163</ecNumber>
    </recommendedName>
</protein>
<reference key="1">
    <citation type="journal article" date="2001" name="Proc. Natl. Acad. Sci. U.S.A.">
        <title>Genome sequence of an industrial microorganism Streptomyces avermitilis: deducing the ability of producing secondary metabolites.</title>
        <authorList>
            <person name="Omura S."/>
            <person name="Ikeda H."/>
            <person name="Ishikawa J."/>
            <person name="Hanamoto A."/>
            <person name="Takahashi C."/>
            <person name="Shinose M."/>
            <person name="Takahashi Y."/>
            <person name="Horikawa H."/>
            <person name="Nakazawa H."/>
            <person name="Osonoe T."/>
            <person name="Kikuchi H."/>
            <person name="Shiba T."/>
            <person name="Sakaki Y."/>
            <person name="Hattori M."/>
        </authorList>
    </citation>
    <scope>NUCLEOTIDE SEQUENCE [LARGE SCALE GENOMIC DNA]</scope>
    <source>
        <strain>ATCC 31267 / DSM 46492 / JCM 5070 / NBRC 14893 / NCIMB 12804 / NRRL 8165 / MA-4680</strain>
    </source>
</reference>
<reference key="2">
    <citation type="journal article" date="2003" name="Nat. Biotechnol.">
        <title>Complete genome sequence and comparative analysis of the industrial microorganism Streptomyces avermitilis.</title>
        <authorList>
            <person name="Ikeda H."/>
            <person name="Ishikawa J."/>
            <person name="Hanamoto A."/>
            <person name="Shinose M."/>
            <person name="Kikuchi H."/>
            <person name="Shiba T."/>
            <person name="Sakaki Y."/>
            <person name="Hattori M."/>
            <person name="Omura S."/>
        </authorList>
    </citation>
    <scope>NUCLEOTIDE SEQUENCE [LARGE SCALE GENOMIC DNA]</scope>
    <source>
        <strain>ATCC 31267 / DSM 46492 / JCM 5070 / NBRC 14893 / NCIMB 12804 / NRRL 8165 / MA-4680</strain>
    </source>
</reference>
<feature type="chain" id="PRO_0000193337" description="Demethylmenaquinone methyltransferase">
    <location>
        <begin position="1"/>
        <end position="231"/>
    </location>
</feature>
<feature type="binding site" evidence="1">
    <location>
        <position position="62"/>
    </location>
    <ligand>
        <name>S-adenosyl-L-methionine</name>
        <dbReference type="ChEBI" id="CHEBI:59789"/>
    </ligand>
</feature>
<feature type="binding site" evidence="1">
    <location>
        <position position="80"/>
    </location>
    <ligand>
        <name>S-adenosyl-L-methionine</name>
        <dbReference type="ChEBI" id="CHEBI:59789"/>
    </ligand>
</feature>
<feature type="binding site" evidence="1">
    <location>
        <begin position="102"/>
        <end position="103"/>
    </location>
    <ligand>
        <name>S-adenosyl-L-methionine</name>
        <dbReference type="ChEBI" id="CHEBI:59789"/>
    </ligand>
</feature>
<feature type="binding site" evidence="1">
    <location>
        <position position="119"/>
    </location>
    <ligand>
        <name>S-adenosyl-L-methionine</name>
        <dbReference type="ChEBI" id="CHEBI:59789"/>
    </ligand>
</feature>
<accession>Q81ZX2</accession>